<evidence type="ECO:0000250" key="1">
    <source>
        <dbReference type="UniProtKB" id="Q8K4Z2"/>
    </source>
</evidence>
<evidence type="ECO:0000255" key="2"/>
<evidence type="ECO:0000255" key="3">
    <source>
        <dbReference type="PROSITE-ProRule" id="PRU00316"/>
    </source>
</evidence>
<evidence type="ECO:0000256" key="4">
    <source>
        <dbReference type="SAM" id="MobiDB-lite"/>
    </source>
</evidence>
<evidence type="ECO:0000269" key="5">
    <source>
    </source>
</evidence>
<evidence type="ECO:0000269" key="6">
    <source>
    </source>
</evidence>
<evidence type="ECO:0000269" key="7">
    <source>
    </source>
</evidence>
<evidence type="ECO:0000269" key="8">
    <source>
    </source>
</evidence>
<evidence type="ECO:0000269" key="9">
    <source>
    </source>
</evidence>
<evidence type="ECO:0000305" key="10"/>
<evidence type="ECO:0000305" key="11">
    <source>
    </source>
</evidence>
<evidence type="ECO:0000305" key="12">
    <source>
    </source>
</evidence>
<evidence type="ECO:0000305" key="13">
    <source>
    </source>
</evidence>
<evidence type="ECO:0007744" key="14">
    <source>
        <dbReference type="PDB" id="4LSD"/>
    </source>
</evidence>
<evidence type="ECO:0007829" key="15">
    <source>
        <dbReference type="PDB" id="4LSD"/>
    </source>
</evidence>
<dbReference type="EMBL" id="AK092102">
    <property type="protein sequence ID" value="BAC03806.1"/>
    <property type="molecule type" value="mRNA"/>
</dbReference>
<dbReference type="EMBL" id="AC114493">
    <property type="status" value="NOT_ANNOTATED_CDS"/>
    <property type="molecule type" value="Genomic_DNA"/>
</dbReference>
<dbReference type="EMBL" id="CH471059">
    <property type="protein sequence ID" value="EAX07499.1"/>
    <property type="molecule type" value="Genomic_DNA"/>
</dbReference>
<dbReference type="EMBL" id="CH471059">
    <property type="protein sequence ID" value="EAX07502.1"/>
    <property type="molecule type" value="Genomic_DNA"/>
</dbReference>
<dbReference type="EMBL" id="CH471059">
    <property type="protein sequence ID" value="EAX07500.1"/>
    <property type="molecule type" value="Genomic_DNA"/>
</dbReference>
<dbReference type="EMBL" id="BC062297">
    <property type="protein sequence ID" value="AAH62297.1"/>
    <property type="molecule type" value="mRNA"/>
</dbReference>
<dbReference type="EMBL" id="BX537781">
    <property type="protein sequence ID" value="CAD97840.1"/>
    <property type="molecule type" value="mRNA"/>
</dbReference>
<dbReference type="EMBL" id="BF221649">
    <property type="status" value="NOT_ANNOTATED_CDS"/>
    <property type="molecule type" value="mRNA"/>
</dbReference>
<dbReference type="CCDS" id="CCDS65483.1">
    <molecule id="Q8NAU1-3"/>
</dbReference>
<dbReference type="RefSeq" id="NP_001165411.2">
    <property type="nucleotide sequence ID" value="NM_001171940.1"/>
</dbReference>
<dbReference type="RefSeq" id="NP_001165412.1">
    <molecule id="Q8NAU1-3"/>
    <property type="nucleotide sequence ID" value="NM_001171941.3"/>
</dbReference>
<dbReference type="RefSeq" id="NP_715637.2">
    <property type="nucleotide sequence ID" value="NM_153756.2"/>
</dbReference>
<dbReference type="PDB" id="4LSD">
    <property type="method" value="X-ray"/>
    <property type="resolution" value="2.28 A"/>
    <property type="chains" value="A/B/C/D/E/F/G/H=81-177"/>
</dbReference>
<dbReference type="PDBsum" id="4LSD"/>
<dbReference type="SMR" id="Q8NAU1"/>
<dbReference type="BioGRID" id="128948">
    <property type="interactions" value="148"/>
</dbReference>
<dbReference type="FunCoup" id="Q8NAU1">
    <property type="interactions" value="461"/>
</dbReference>
<dbReference type="IntAct" id="Q8NAU1">
    <property type="interactions" value="124"/>
</dbReference>
<dbReference type="STRING" id="9606.ENSP00000362570"/>
<dbReference type="GlyCosmos" id="Q8NAU1">
    <property type="glycosylation" value="2 sites, No reported glycans"/>
</dbReference>
<dbReference type="GlyGen" id="Q8NAU1">
    <property type="glycosylation" value="2 sites"/>
</dbReference>
<dbReference type="iPTMnet" id="Q8NAU1"/>
<dbReference type="PhosphoSitePlus" id="Q8NAU1"/>
<dbReference type="BioMuta" id="FNDC5"/>
<dbReference type="DMDM" id="403314395"/>
<dbReference type="MassIVE" id="Q8NAU1"/>
<dbReference type="PaxDb" id="9606-ENSP00000362570"/>
<dbReference type="PeptideAtlas" id="Q8NAU1"/>
<dbReference type="ProteomicsDB" id="72701">
    <molecule id="Q8NAU1-2"/>
</dbReference>
<dbReference type="ProteomicsDB" id="72702">
    <molecule id="Q8NAU1-3"/>
</dbReference>
<dbReference type="ProteomicsDB" id="72703">
    <molecule id="Q8NAU1-4"/>
</dbReference>
<dbReference type="Antibodypedia" id="54866">
    <property type="antibodies" value="215 antibodies from 29 providers"/>
</dbReference>
<dbReference type="DNASU" id="252995"/>
<dbReference type="Ensembl" id="ENST00000496770.1">
    <molecule id="Q8NAU1-3"/>
    <property type="protein sequence ID" value="ENSP00000476320.1"/>
    <property type="gene ID" value="ENSG00000160097.21"/>
</dbReference>
<dbReference type="Ensembl" id="ENST00000710568.1">
    <molecule id="Q8NAU1-5"/>
    <property type="protein sequence ID" value="ENSP00000518350.1"/>
    <property type="gene ID" value="ENSG00000160097.21"/>
</dbReference>
<dbReference type="GeneID" id="252995"/>
<dbReference type="KEGG" id="hsa:252995"/>
<dbReference type="UCSC" id="uc001bwg.5">
    <molecule id="Q8NAU1-5"/>
    <property type="organism name" value="human"/>
</dbReference>
<dbReference type="AGR" id="HGNC:20240"/>
<dbReference type="CTD" id="252995"/>
<dbReference type="DisGeNET" id="252995"/>
<dbReference type="GeneCards" id="FNDC5"/>
<dbReference type="HGNC" id="HGNC:20240">
    <property type="gene designation" value="FNDC5"/>
</dbReference>
<dbReference type="HPA" id="ENSG00000160097">
    <property type="expression patterns" value="Group enriched (skeletal muscle, tongue)"/>
</dbReference>
<dbReference type="MIM" id="611906">
    <property type="type" value="gene"/>
</dbReference>
<dbReference type="neXtProt" id="NX_Q8NAU1"/>
<dbReference type="OpenTargets" id="ENSG00000160097"/>
<dbReference type="PharmGKB" id="PA134924607"/>
<dbReference type="VEuPathDB" id="HostDB:ENSG00000160097"/>
<dbReference type="eggNOG" id="ENOG502QQCU">
    <property type="taxonomic scope" value="Eukaryota"/>
</dbReference>
<dbReference type="GeneTree" id="ENSGT00390000004923"/>
<dbReference type="HOGENOM" id="CLU_089166_2_0_1"/>
<dbReference type="InParanoid" id="Q8NAU1"/>
<dbReference type="OMA" id="YFSCASL"/>
<dbReference type="OrthoDB" id="5843172at2759"/>
<dbReference type="PAN-GO" id="Q8NAU1">
    <property type="GO annotations" value="3 GO annotations based on evolutionary models"/>
</dbReference>
<dbReference type="TreeFam" id="TF325415"/>
<dbReference type="PathwayCommons" id="Q8NAU1"/>
<dbReference type="SignaLink" id="Q8NAU1"/>
<dbReference type="BioGRID-ORCS" id="252995">
    <property type="hits" value="5 hits in 968 CRISPR screens"/>
</dbReference>
<dbReference type="ChiTaRS" id="FNDC5">
    <property type="organism name" value="human"/>
</dbReference>
<dbReference type="EvolutionaryTrace" id="Q8NAU1"/>
<dbReference type="GenomeRNAi" id="252995"/>
<dbReference type="Pharos" id="Q8NAU1">
    <property type="development level" value="Tbio"/>
</dbReference>
<dbReference type="PRO" id="PR:Q8NAU1"/>
<dbReference type="Proteomes" id="UP000005640">
    <property type="component" value="Chromosome 1"/>
</dbReference>
<dbReference type="RNAct" id="Q8NAU1">
    <property type="molecule type" value="protein"/>
</dbReference>
<dbReference type="Bgee" id="ENSG00000160097">
    <property type="expression patterns" value="Expressed in skeletal muscle tissue of biceps brachii and 142 other cell types or tissues"/>
</dbReference>
<dbReference type="ExpressionAtlas" id="Q8NAU1">
    <property type="expression patterns" value="baseline and differential"/>
</dbReference>
<dbReference type="GO" id="GO:0005783">
    <property type="term" value="C:endoplasmic reticulum"/>
    <property type="evidence" value="ECO:0000250"/>
    <property type="project" value="UniProtKB"/>
</dbReference>
<dbReference type="GO" id="GO:0005576">
    <property type="term" value="C:extracellular region"/>
    <property type="evidence" value="ECO:0000250"/>
    <property type="project" value="UniProtKB"/>
</dbReference>
<dbReference type="GO" id="GO:0005778">
    <property type="term" value="C:peroxisomal membrane"/>
    <property type="evidence" value="ECO:0007669"/>
    <property type="project" value="UniProtKB-SubCell"/>
</dbReference>
<dbReference type="GO" id="GO:0005886">
    <property type="term" value="C:plasma membrane"/>
    <property type="evidence" value="ECO:0000250"/>
    <property type="project" value="UniProtKB"/>
</dbReference>
<dbReference type="GO" id="GO:0005179">
    <property type="term" value="F:hormone activity"/>
    <property type="evidence" value="ECO:0007669"/>
    <property type="project" value="UniProtKB-KW"/>
</dbReference>
<dbReference type="GO" id="GO:0090336">
    <property type="term" value="P:positive regulation of brown fat cell differentiation"/>
    <property type="evidence" value="ECO:0000250"/>
    <property type="project" value="UniProtKB"/>
</dbReference>
<dbReference type="GO" id="GO:0014850">
    <property type="term" value="P:response to muscle activity"/>
    <property type="evidence" value="ECO:0000250"/>
    <property type="project" value="UniProtKB"/>
</dbReference>
<dbReference type="CDD" id="cd00063">
    <property type="entry name" value="FN3"/>
    <property type="match status" value="1"/>
</dbReference>
<dbReference type="FunFam" id="2.60.40.10:FF:000117">
    <property type="entry name" value="Fibronectin type III domain containing 5"/>
    <property type="match status" value="1"/>
</dbReference>
<dbReference type="Gene3D" id="2.60.40.10">
    <property type="entry name" value="Immunoglobulins"/>
    <property type="match status" value="1"/>
</dbReference>
<dbReference type="InterPro" id="IPR003961">
    <property type="entry name" value="FN3_dom"/>
</dbReference>
<dbReference type="InterPro" id="IPR036116">
    <property type="entry name" value="FN3_sf"/>
</dbReference>
<dbReference type="InterPro" id="IPR052120">
    <property type="entry name" value="FNDC_type_III_4/5"/>
</dbReference>
<dbReference type="InterPro" id="IPR013783">
    <property type="entry name" value="Ig-like_fold"/>
</dbReference>
<dbReference type="PANTHER" id="PTHR14470">
    <property type="entry name" value="FIBRONECTIN TYPE III DOMAIN-CONTAINING PROTEIN"/>
    <property type="match status" value="1"/>
</dbReference>
<dbReference type="PANTHER" id="PTHR14470:SF1">
    <property type="entry name" value="FIBRONECTIN TYPE III DOMAIN-CONTAINING PROTEIN 5"/>
    <property type="match status" value="1"/>
</dbReference>
<dbReference type="Pfam" id="PF00041">
    <property type="entry name" value="fn3"/>
    <property type="match status" value="1"/>
</dbReference>
<dbReference type="SMART" id="SM00060">
    <property type="entry name" value="FN3"/>
    <property type="match status" value="1"/>
</dbReference>
<dbReference type="SUPFAM" id="SSF49265">
    <property type="entry name" value="Fibronectin type III"/>
    <property type="match status" value="1"/>
</dbReference>
<dbReference type="PROSITE" id="PS50853">
    <property type="entry name" value="FN3"/>
    <property type="match status" value="1"/>
</dbReference>
<keyword id="KW-0002">3D-structure</keyword>
<keyword id="KW-0877">Alternative promoter usage</keyword>
<keyword id="KW-0025">Alternative splicing</keyword>
<keyword id="KW-1003">Cell membrane</keyword>
<keyword id="KW-0325">Glycoprotein</keyword>
<keyword id="KW-0372">Hormone</keyword>
<keyword id="KW-0472">Membrane</keyword>
<keyword id="KW-0576">Peroxisome</keyword>
<keyword id="KW-1267">Proteomics identification</keyword>
<keyword id="KW-1185">Reference proteome</keyword>
<keyword id="KW-0964">Secreted</keyword>
<keyword id="KW-0812">Transmembrane</keyword>
<keyword id="KW-1133">Transmembrane helix</keyword>
<reference key="1">
    <citation type="journal article" date="2004" name="Nat. Genet.">
        <title>Complete sequencing and characterization of 21,243 full-length human cDNAs.</title>
        <authorList>
            <person name="Ota T."/>
            <person name="Suzuki Y."/>
            <person name="Nishikawa T."/>
            <person name="Otsuki T."/>
            <person name="Sugiyama T."/>
            <person name="Irie R."/>
            <person name="Wakamatsu A."/>
            <person name="Hayashi K."/>
            <person name="Sato H."/>
            <person name="Nagai K."/>
            <person name="Kimura K."/>
            <person name="Makita H."/>
            <person name="Sekine M."/>
            <person name="Obayashi M."/>
            <person name="Nishi T."/>
            <person name="Shibahara T."/>
            <person name="Tanaka T."/>
            <person name="Ishii S."/>
            <person name="Yamamoto J."/>
            <person name="Saito K."/>
            <person name="Kawai Y."/>
            <person name="Isono Y."/>
            <person name="Nakamura Y."/>
            <person name="Nagahari K."/>
            <person name="Murakami K."/>
            <person name="Yasuda T."/>
            <person name="Iwayanagi T."/>
            <person name="Wagatsuma M."/>
            <person name="Shiratori A."/>
            <person name="Sudo H."/>
            <person name="Hosoiri T."/>
            <person name="Kaku Y."/>
            <person name="Kodaira H."/>
            <person name="Kondo H."/>
            <person name="Sugawara M."/>
            <person name="Takahashi M."/>
            <person name="Kanda K."/>
            <person name="Yokoi T."/>
            <person name="Furuya T."/>
            <person name="Kikkawa E."/>
            <person name="Omura Y."/>
            <person name="Abe K."/>
            <person name="Kamihara K."/>
            <person name="Katsuta N."/>
            <person name="Sato K."/>
            <person name="Tanikawa M."/>
            <person name="Yamazaki M."/>
            <person name="Ninomiya K."/>
            <person name="Ishibashi T."/>
            <person name="Yamashita H."/>
            <person name="Murakawa K."/>
            <person name="Fujimori K."/>
            <person name="Tanai H."/>
            <person name="Kimata M."/>
            <person name="Watanabe M."/>
            <person name="Hiraoka S."/>
            <person name="Chiba Y."/>
            <person name="Ishida S."/>
            <person name="Ono Y."/>
            <person name="Takiguchi S."/>
            <person name="Watanabe S."/>
            <person name="Yosida M."/>
            <person name="Hotuta T."/>
            <person name="Kusano J."/>
            <person name="Kanehori K."/>
            <person name="Takahashi-Fujii A."/>
            <person name="Hara H."/>
            <person name="Tanase T.-O."/>
            <person name="Nomura Y."/>
            <person name="Togiya S."/>
            <person name="Komai F."/>
            <person name="Hara R."/>
            <person name="Takeuchi K."/>
            <person name="Arita M."/>
            <person name="Imose N."/>
            <person name="Musashino K."/>
            <person name="Yuuki H."/>
            <person name="Oshima A."/>
            <person name="Sasaki N."/>
            <person name="Aotsuka S."/>
            <person name="Yoshikawa Y."/>
            <person name="Matsunawa H."/>
            <person name="Ichihara T."/>
            <person name="Shiohata N."/>
            <person name="Sano S."/>
            <person name="Moriya S."/>
            <person name="Momiyama H."/>
            <person name="Satoh N."/>
            <person name="Takami S."/>
            <person name="Terashima Y."/>
            <person name="Suzuki O."/>
            <person name="Nakagawa S."/>
            <person name="Senoh A."/>
            <person name="Mizoguchi H."/>
            <person name="Goto Y."/>
            <person name="Shimizu F."/>
            <person name="Wakebe H."/>
            <person name="Hishigaki H."/>
            <person name="Watanabe T."/>
            <person name="Sugiyama A."/>
            <person name="Takemoto M."/>
            <person name="Kawakami B."/>
            <person name="Yamazaki M."/>
            <person name="Watanabe K."/>
            <person name="Kumagai A."/>
            <person name="Itakura S."/>
            <person name="Fukuzumi Y."/>
            <person name="Fujimori Y."/>
            <person name="Komiyama M."/>
            <person name="Tashiro H."/>
            <person name="Tanigami A."/>
            <person name="Fujiwara T."/>
            <person name="Ono T."/>
            <person name="Yamada K."/>
            <person name="Fujii Y."/>
            <person name="Ozaki K."/>
            <person name="Hirao M."/>
            <person name="Ohmori Y."/>
            <person name="Kawabata A."/>
            <person name="Hikiji T."/>
            <person name="Kobatake N."/>
            <person name="Inagaki H."/>
            <person name="Ikema Y."/>
            <person name="Okamoto S."/>
            <person name="Okitani R."/>
            <person name="Kawakami T."/>
            <person name="Noguchi S."/>
            <person name="Itoh T."/>
            <person name="Shigeta K."/>
            <person name="Senba T."/>
            <person name="Matsumura K."/>
            <person name="Nakajima Y."/>
            <person name="Mizuno T."/>
            <person name="Morinaga M."/>
            <person name="Sasaki M."/>
            <person name="Togashi T."/>
            <person name="Oyama M."/>
            <person name="Hata H."/>
            <person name="Watanabe M."/>
            <person name="Komatsu T."/>
            <person name="Mizushima-Sugano J."/>
            <person name="Satoh T."/>
            <person name="Shirai Y."/>
            <person name="Takahashi Y."/>
            <person name="Nakagawa K."/>
            <person name="Okumura K."/>
            <person name="Nagase T."/>
            <person name="Nomura N."/>
            <person name="Kikuchi H."/>
            <person name="Masuho Y."/>
            <person name="Yamashita R."/>
            <person name="Nakai K."/>
            <person name="Yada T."/>
            <person name="Nakamura Y."/>
            <person name="Ohara O."/>
            <person name="Isogai T."/>
            <person name="Sugano S."/>
        </authorList>
    </citation>
    <scope>NUCLEOTIDE SEQUENCE [LARGE SCALE MRNA] (ISOFORM 4)</scope>
</reference>
<reference key="2">
    <citation type="journal article" date="2006" name="Nature">
        <title>The DNA sequence and biological annotation of human chromosome 1.</title>
        <authorList>
            <person name="Gregory S.G."/>
            <person name="Barlow K.F."/>
            <person name="McLay K.E."/>
            <person name="Kaul R."/>
            <person name="Swarbreck D."/>
            <person name="Dunham A."/>
            <person name="Scott C.E."/>
            <person name="Howe K.L."/>
            <person name="Woodfine K."/>
            <person name="Spencer C.C.A."/>
            <person name="Jones M.C."/>
            <person name="Gillson C."/>
            <person name="Searle S."/>
            <person name="Zhou Y."/>
            <person name="Kokocinski F."/>
            <person name="McDonald L."/>
            <person name="Evans R."/>
            <person name="Phillips K."/>
            <person name="Atkinson A."/>
            <person name="Cooper R."/>
            <person name="Jones C."/>
            <person name="Hall R.E."/>
            <person name="Andrews T.D."/>
            <person name="Lloyd C."/>
            <person name="Ainscough R."/>
            <person name="Almeida J.P."/>
            <person name="Ambrose K.D."/>
            <person name="Anderson F."/>
            <person name="Andrew R.W."/>
            <person name="Ashwell R.I.S."/>
            <person name="Aubin K."/>
            <person name="Babbage A.K."/>
            <person name="Bagguley C.L."/>
            <person name="Bailey J."/>
            <person name="Beasley H."/>
            <person name="Bethel G."/>
            <person name="Bird C.P."/>
            <person name="Bray-Allen S."/>
            <person name="Brown J.Y."/>
            <person name="Brown A.J."/>
            <person name="Buckley D."/>
            <person name="Burton J."/>
            <person name="Bye J."/>
            <person name="Carder C."/>
            <person name="Chapman J.C."/>
            <person name="Clark S.Y."/>
            <person name="Clarke G."/>
            <person name="Clee C."/>
            <person name="Cobley V."/>
            <person name="Collier R.E."/>
            <person name="Corby N."/>
            <person name="Coville G.J."/>
            <person name="Davies J."/>
            <person name="Deadman R."/>
            <person name="Dunn M."/>
            <person name="Earthrowl M."/>
            <person name="Ellington A.G."/>
            <person name="Errington H."/>
            <person name="Frankish A."/>
            <person name="Frankland J."/>
            <person name="French L."/>
            <person name="Garner P."/>
            <person name="Garnett J."/>
            <person name="Gay L."/>
            <person name="Ghori M.R.J."/>
            <person name="Gibson R."/>
            <person name="Gilby L.M."/>
            <person name="Gillett W."/>
            <person name="Glithero R.J."/>
            <person name="Grafham D.V."/>
            <person name="Griffiths C."/>
            <person name="Griffiths-Jones S."/>
            <person name="Grocock R."/>
            <person name="Hammond S."/>
            <person name="Harrison E.S.I."/>
            <person name="Hart E."/>
            <person name="Haugen E."/>
            <person name="Heath P.D."/>
            <person name="Holmes S."/>
            <person name="Holt K."/>
            <person name="Howden P.J."/>
            <person name="Hunt A.R."/>
            <person name="Hunt S.E."/>
            <person name="Hunter G."/>
            <person name="Isherwood J."/>
            <person name="James R."/>
            <person name="Johnson C."/>
            <person name="Johnson D."/>
            <person name="Joy A."/>
            <person name="Kay M."/>
            <person name="Kershaw J.K."/>
            <person name="Kibukawa M."/>
            <person name="Kimberley A.M."/>
            <person name="King A."/>
            <person name="Knights A.J."/>
            <person name="Lad H."/>
            <person name="Laird G."/>
            <person name="Lawlor S."/>
            <person name="Leongamornlert D.A."/>
            <person name="Lloyd D.M."/>
            <person name="Loveland J."/>
            <person name="Lovell J."/>
            <person name="Lush M.J."/>
            <person name="Lyne R."/>
            <person name="Martin S."/>
            <person name="Mashreghi-Mohammadi M."/>
            <person name="Matthews L."/>
            <person name="Matthews N.S.W."/>
            <person name="McLaren S."/>
            <person name="Milne S."/>
            <person name="Mistry S."/>
            <person name="Moore M.J.F."/>
            <person name="Nickerson T."/>
            <person name="O'Dell C.N."/>
            <person name="Oliver K."/>
            <person name="Palmeiri A."/>
            <person name="Palmer S.A."/>
            <person name="Parker A."/>
            <person name="Patel D."/>
            <person name="Pearce A.V."/>
            <person name="Peck A.I."/>
            <person name="Pelan S."/>
            <person name="Phelps K."/>
            <person name="Phillimore B.J."/>
            <person name="Plumb R."/>
            <person name="Rajan J."/>
            <person name="Raymond C."/>
            <person name="Rouse G."/>
            <person name="Saenphimmachak C."/>
            <person name="Sehra H.K."/>
            <person name="Sheridan E."/>
            <person name="Shownkeen R."/>
            <person name="Sims S."/>
            <person name="Skuce C.D."/>
            <person name="Smith M."/>
            <person name="Steward C."/>
            <person name="Subramanian S."/>
            <person name="Sycamore N."/>
            <person name="Tracey A."/>
            <person name="Tromans A."/>
            <person name="Van Helmond Z."/>
            <person name="Wall M."/>
            <person name="Wallis J.M."/>
            <person name="White S."/>
            <person name="Whitehead S.L."/>
            <person name="Wilkinson J.E."/>
            <person name="Willey D.L."/>
            <person name="Williams H."/>
            <person name="Wilming L."/>
            <person name="Wray P.W."/>
            <person name="Wu Z."/>
            <person name="Coulson A."/>
            <person name="Vaudin M."/>
            <person name="Sulston J.E."/>
            <person name="Durbin R.M."/>
            <person name="Hubbard T."/>
            <person name="Wooster R."/>
            <person name="Dunham I."/>
            <person name="Carter N.P."/>
            <person name="McVean G."/>
            <person name="Ross M.T."/>
            <person name="Harrow J."/>
            <person name="Olson M.V."/>
            <person name="Beck S."/>
            <person name="Rogers J."/>
            <person name="Bentley D.R."/>
        </authorList>
    </citation>
    <scope>NUCLEOTIDE SEQUENCE [LARGE SCALE GENOMIC DNA]</scope>
</reference>
<reference key="3">
    <citation type="submission" date="2005-09" db="EMBL/GenBank/DDBJ databases">
        <authorList>
            <person name="Mural R.J."/>
            <person name="Istrail S."/>
            <person name="Sutton G.G."/>
            <person name="Florea L."/>
            <person name="Halpern A.L."/>
            <person name="Mobarry C.M."/>
            <person name="Lippert R."/>
            <person name="Walenz B."/>
            <person name="Shatkay H."/>
            <person name="Dew I."/>
            <person name="Miller J.R."/>
            <person name="Flanigan M.J."/>
            <person name="Edwards N.J."/>
            <person name="Bolanos R."/>
            <person name="Fasulo D."/>
            <person name="Halldorsson B.V."/>
            <person name="Hannenhalli S."/>
            <person name="Turner R."/>
            <person name="Yooseph S."/>
            <person name="Lu F."/>
            <person name="Nusskern D.R."/>
            <person name="Shue B.C."/>
            <person name="Zheng X.H."/>
            <person name="Zhong F."/>
            <person name="Delcher A.L."/>
            <person name="Huson D.H."/>
            <person name="Kravitz S.A."/>
            <person name="Mouchard L."/>
            <person name="Reinert K."/>
            <person name="Remington K.A."/>
            <person name="Clark A.G."/>
            <person name="Waterman M.S."/>
            <person name="Eichler E.E."/>
            <person name="Adams M.D."/>
            <person name="Hunkapiller M.W."/>
            <person name="Myers E.W."/>
            <person name="Venter J.C."/>
        </authorList>
    </citation>
    <scope>NUCLEOTIDE SEQUENCE [LARGE SCALE GENOMIC DNA]</scope>
</reference>
<reference key="4">
    <citation type="journal article" date="2004" name="Genome Res.">
        <title>The status, quality, and expansion of the NIH full-length cDNA project: the Mammalian Gene Collection (MGC).</title>
        <authorList>
            <consortium name="The MGC Project Team"/>
        </authorList>
    </citation>
    <scope>NUCLEOTIDE SEQUENCE [LARGE SCALE MRNA] (ISOFORM 3)</scope>
    <source>
        <tissue>Brain</tissue>
    </source>
</reference>
<reference key="5">
    <citation type="submission" date="2000-11" db="EMBL/GenBank/DDBJ databases">
        <authorList>
            <consortium name="The Cancer Genome Anatomy Project (CGAP) at the National Cancer Institute"/>
        </authorList>
    </citation>
    <scope>NUCLEOTIDE SEQUENCE [LARGE SCALE MRNA] OF 27-181 (ISOFORM 1)</scope>
</reference>
<reference key="6">
    <citation type="journal article" date="2007" name="BMC Genomics">
        <title>The full-ORF clone resource of the German cDNA consortium.</title>
        <authorList>
            <person name="Bechtel S."/>
            <person name="Rosenfelder H."/>
            <person name="Duda A."/>
            <person name="Schmidt C.P."/>
            <person name="Ernst U."/>
            <person name="Wellenreuther R."/>
            <person name="Mehrle A."/>
            <person name="Schuster C."/>
            <person name="Bahr A."/>
            <person name="Bloecker H."/>
            <person name="Heubner D."/>
            <person name="Hoerlein A."/>
            <person name="Michel G."/>
            <person name="Wedler H."/>
            <person name="Koehrer K."/>
            <person name="Ottenwaelder B."/>
            <person name="Poustka A."/>
            <person name="Wiemann S."/>
            <person name="Schupp I."/>
        </authorList>
    </citation>
    <scope>NUCLEOTIDE SEQUENCE [LARGE SCALE MRNA] OF 68-260 (ISOFORM 2)</scope>
    <source>
        <tissue>Fetal liver</tissue>
    </source>
</reference>
<reference key="7">
    <citation type="journal article" date="2012" name="Nature">
        <title>A PGC1-alpha-dependent myokine that drives brown-fat-like development of white fat and thermogenesis.</title>
        <authorList>
            <person name="Bostrom P."/>
            <person name="Wu J."/>
            <person name="Jedrychowski M.P."/>
            <person name="Korde A."/>
            <person name="Ye L."/>
            <person name="Lo J.C."/>
            <person name="Rasbach K.A."/>
            <person name="Bostrom E.A."/>
            <person name="Choi J.H."/>
            <person name="Long J.Z."/>
            <person name="Kajimura S."/>
            <person name="Zingaretti M.C."/>
            <person name="Vind B.F."/>
            <person name="Tu H."/>
            <person name="Cinti S."/>
            <person name="Hojlund K."/>
            <person name="Gygi S.P."/>
            <person name="Spiegelman B.M."/>
        </authorList>
    </citation>
    <scope>INDUCTION</scope>
    <scope>SUBCELLULAR LOCATION</scope>
</reference>
<reference key="8">
    <citation type="journal article" date="2013" name="PLoS ONE">
        <title>Evidence against a Beneficial Effect of Irisin in Humans.</title>
        <authorList>
            <person name="Raschke S."/>
            <person name="Elsen M."/>
            <person name="Gassenhuber H."/>
            <person name="Sommerfeld M."/>
            <person name="Schwahn U."/>
            <person name="Brockmann B."/>
            <person name="Jung R."/>
            <person name="Wisloff U."/>
            <person name="Tjonna A.E."/>
            <person name="Raastad T."/>
            <person name="Hallen J."/>
            <person name="Norheim F."/>
            <person name="Drevon C.A."/>
            <person name="Romacho T."/>
            <person name="Eckardt K."/>
            <person name="Eckel J."/>
        </authorList>
    </citation>
    <scope>INDUCTION</scope>
    <scope>TISSUE SPECIFICITY</scope>
</reference>
<reference key="9">
    <citation type="journal article" date="2015" name="Cell Metab.">
        <title>Detection and Quantitation of Circulating Human Irisin by Tandem Mass Spectrometry.</title>
        <authorList>
            <person name="Jedrychowski M.P."/>
            <person name="Wrann C.D."/>
            <person name="Paulo J.A."/>
            <person name="Gerber K.K."/>
            <person name="Szpyt J."/>
            <person name="Robinson M.M."/>
            <person name="Nair K.S."/>
            <person name="Gygi S.P."/>
            <person name="Spiegelman B.M."/>
        </authorList>
    </citation>
    <scope>IDENTIFICATION OF IRISIN</scope>
    <scope>INDUCTION</scope>
</reference>
<reference key="10">
    <citation type="journal article" date="2024" name="Cell Metab.">
        <title>Fndc5 is translated from an upstream ATG start codon and cleaved to produce irisin myokine precursor protein in humans and mice.</title>
        <authorList>
            <person name="Witmer N.H."/>
            <person name="Linzer C.R."/>
            <person name="Boudreau R.L."/>
        </authorList>
    </citation>
    <scope>ALTERNATIVE PROMOTER USAGE (ISOFORM 1)</scope>
</reference>
<reference evidence="14" key="11">
    <citation type="journal article" date="2013" name="J. Biol. Chem.">
        <title>The structure of irisin reveals a novel intersubunit beta-sheet fibronectin type III (FNIII) dimer: implications for receptor activation.</title>
        <authorList>
            <person name="Schumacher M.A."/>
            <person name="Chinnam N."/>
            <person name="Ohashi T."/>
            <person name="Shah R.S."/>
            <person name="Erickson H.P."/>
        </authorList>
    </citation>
    <scope>X-RAY CRYSTALLOGRAPHY (2.3 ANGSTROMS) OF 81-177</scope>
    <scope>SUBUNIT</scope>
    <scope>MUTAGENESIS OF ARG-126</scope>
</reference>
<comment type="function">
    <molecule>Irisin</molecule>
    <text evidence="1">Mediates beneficial effects of muscular exercise. Induces browning of white adipose tissue by stimulating UCP1 expression, at least in part, via the nuclear receptor PPARA.</text>
</comment>
<comment type="subunit">
    <molecule>Irisin</molecule>
    <text evidence="7">Dimer; may exist in other oligomeric forms.</text>
</comment>
<comment type="subcellular location">
    <molecule>Fibronectin type III domain-containing protein 5</molecule>
    <subcellularLocation>
        <location evidence="5">Cell membrane</location>
        <topology evidence="2">Single-pass membrane protein</topology>
    </subcellularLocation>
    <subcellularLocation>
        <location evidence="1">Peroxisome membrane</location>
        <topology evidence="2">Single-pass membrane protein</topology>
    </subcellularLocation>
    <text evidence="1">Imported into peroxisomes through the PEX5 receptor pathway.</text>
</comment>
<comment type="subcellular location">
    <molecule>Irisin</molecule>
    <subcellularLocation>
        <location evidence="5">Secreted</location>
    </subcellularLocation>
    <text evidence="5">Detected in plasma following endurance exercise.</text>
</comment>
<comment type="alternative products">
    <event type="alternative promoter"/>
    <event type="alternative splicing"/>
    <isoform>
        <id>Q8NAU1-5</id>
        <name>1</name>
        <sequence type="displayed"/>
    </isoform>
    <isoform>
        <id>Q8NAU1-2</id>
        <name>2</name>
        <sequence type="described" ref="VSP_062500 VSP_062501"/>
    </isoform>
    <isoform>
        <id>Q8NAU1-3</id>
        <name>3</name>
        <sequence type="described" ref="VSP_062499 VSP_062502"/>
    </isoform>
    <isoform>
        <id>Q8NAU1-4</id>
        <name>4</name>
        <sequence type="described" ref="VSP_062499"/>
    </isoform>
</comment>
<comment type="tissue specificity">
    <text evidence="6">Widely expressed, with highest levels in heart. Very low expression, if any, in colon, pancreas and spleen.</text>
</comment>
<comment type="induction">
    <text evidence="5 6">Up-regulated twofold by muscular exercise at the mRNA and protein level; this effect has been suggested to be mediated by PPARGC1A (PubMed:22237023). However, up-regulation at the mRNA level upon exercise could not be reproduced in another study (PubMed:24040023).</text>
</comment>
<comment type="induction">
    <molecule>Irisin</molecule>
    <text evidence="8">Present in sedentary individuals with significantly increased levels in individuals undergoing aerobic interval training.</text>
</comment>
<comment type="domain">
    <text evidence="7">Fibronectin type-III domain is capable of forming a continuous intersubunit beta-sheet dimer; dimerization may thereby play a role in cell-cell adhesion or signaling.</text>
</comment>
<comment type="PTM">
    <text evidence="1">The extracellular domain is cleaved and released from the cell membrane.</text>
</comment>
<comment type="PTM">
    <text evidence="1">N-Glycosylated.</text>
</comment>
<comment type="miscellaneous">
    <molecule>Isoform 1</molecule>
    <text evidence="9">Produced by alternative promoter usage.</text>
</comment>
<comment type="miscellaneous">
    <molecule>Isoform 2</molecule>
    <text evidence="10">Produced by alternative splicing of isoform 1.</text>
</comment>
<comment type="miscellaneous">
    <molecule>Isoform 3</molecule>
    <text evidence="10">Produced by alternative promoter usage and alternative splicing.</text>
</comment>
<comment type="miscellaneous">
    <molecule>Isoform 4</molecule>
    <text evidence="10">Produced by alternative promoter usage.</text>
</comment>
<comment type="caution">
    <text evidence="5 8 9 10">There has been some uncertainty over the initiator of the protein. Some transcript evidence points to Met-124 as the start but, in this short version of the protein, the irisin peptide is severely truncated. But Western blot analysis suggests the presence of a full-length irisin peptide in human (PubMed:22237023, PubMed:26278051). An alternative upstream initiation codon was proposed which is conserved across most mammals but this corresponds to an ATA codon in human and translation from this start site in human has not been confirmed. A further alternative to the putative N-terminal ATA codon as the initiation site is provided by an upstream transcription start site which allows use of a highly conserved AUG initiation codon and is likely to represent the true initiator of the protein (PubMed:38471509).</text>
</comment>
<comment type="caution">
    <text evidence="6 10">Contrary to mouse, was shown to have no involvement in the beneficial effects of muscular exercise nor in the induction of browning of human white adipose tissue (PubMed:24040023). However, this may be due to the construct used which did not start from the upstream AUG transcription start site.</text>
</comment>
<proteinExistence type="evidence at protein level"/>
<protein>
    <recommendedName>
        <fullName>Fibronectin type III domain-containing protein 5</fullName>
    </recommendedName>
    <alternativeName>
        <fullName>Fibronectin type III repeat-containing protein 2</fullName>
    </alternativeName>
    <component>
        <recommendedName>
            <fullName>Irisin</fullName>
        </recommendedName>
    </component>
</protein>
<feature type="chain" id="PRO_0000328971" description="Fibronectin type III domain-containing protein 5">
    <location>
        <begin position="1"/>
        <end position="260"/>
    </location>
</feature>
<feature type="chain" id="PRO_0000415857" description="Irisin">
    <location>
        <begin position="1"/>
        <end position="191"/>
    </location>
</feature>
<feature type="transmembrane region" description="Helical" evidence="2">
    <location>
        <begin position="201"/>
        <end position="221"/>
    </location>
</feature>
<feature type="domain" description="Fibronectin type-III" evidence="3">
    <location>
        <begin position="84"/>
        <end position="175"/>
    </location>
</feature>
<feature type="region of interest" description="Disordered" evidence="4">
    <location>
        <begin position="1"/>
        <end position="56"/>
    </location>
</feature>
<feature type="region of interest" description="Disordered" evidence="4">
    <location>
        <begin position="230"/>
        <end position="260"/>
    </location>
</feature>
<feature type="short sequence motif" description="Microbody targeting signal" evidence="2">
    <location>
        <begin position="258"/>
        <end position="260"/>
    </location>
</feature>
<feature type="compositionally biased region" description="Basic and acidic residues" evidence="4">
    <location>
        <begin position="10"/>
        <end position="28"/>
    </location>
</feature>
<feature type="compositionally biased region" description="Low complexity" evidence="4">
    <location>
        <begin position="29"/>
        <end position="56"/>
    </location>
</feature>
<feature type="compositionally biased region" description="Basic and acidic residues" evidence="4">
    <location>
        <begin position="230"/>
        <end position="241"/>
    </location>
</feature>
<feature type="compositionally biased region" description="Gly residues" evidence="4">
    <location>
        <begin position="251"/>
        <end position="260"/>
    </location>
</feature>
<feature type="site" description="Required for dimerization" evidence="7">
    <location>
        <position position="126"/>
    </location>
</feature>
<feature type="glycosylation site" description="N-linked (GlcNAc...) asparagine" evidence="2">
    <location>
        <position position="87"/>
    </location>
</feature>
<feature type="glycosylation site" description="N-linked (GlcNAc...) asparagine" evidence="2">
    <location>
        <position position="132"/>
    </location>
</feature>
<feature type="splice variant" id="VSP_062499" description="In isoform 3 and isoform 4." evidence="11 12">
    <location>
        <begin position="1"/>
        <end position="123"/>
    </location>
</feature>
<feature type="splice variant" id="VSP_062500" description="In isoform 2." evidence="13">
    <original>KD</original>
    <variation>EA</variation>
    <location>
        <begin position="228"/>
        <end position="229"/>
    </location>
</feature>
<feature type="splice variant" id="VSP_062501" description="In isoform 2." evidence="13">
    <location>
        <begin position="230"/>
        <end position="260"/>
    </location>
</feature>
<feature type="splice variant" id="VSP_062502" description="In isoform 3." evidence="12">
    <original>I</original>
    <variation>VRARPGPGWATLCLMLW</variation>
    <location>
        <position position="260"/>
    </location>
</feature>
<feature type="mutagenesis site" description="Abolishes dimerization; probably prevents inter-subunit salt bridge formation." evidence="7">
    <original>R</original>
    <variation>E</variation>
    <location>
        <position position="126"/>
    </location>
</feature>
<feature type="strand" evidence="15">
    <location>
        <begin position="86"/>
        <end position="92"/>
    </location>
</feature>
<feature type="strand" evidence="15">
    <location>
        <begin position="98"/>
        <end position="103"/>
    </location>
</feature>
<feature type="turn" evidence="15">
    <location>
        <begin position="107"/>
        <end position="109"/>
    </location>
</feature>
<feature type="strand" evidence="15">
    <location>
        <begin position="110"/>
        <end position="121"/>
    </location>
</feature>
<feature type="strand" evidence="15">
    <location>
        <begin position="125"/>
        <end position="132"/>
    </location>
</feature>
<feature type="strand" evidence="15">
    <location>
        <begin position="137"/>
        <end position="140"/>
    </location>
</feature>
<feature type="strand" evidence="15">
    <location>
        <begin position="148"/>
        <end position="159"/>
    </location>
</feature>
<feature type="strand" evidence="15">
    <location>
        <begin position="168"/>
        <end position="171"/>
    </location>
</feature>
<organism>
    <name type="scientific">Homo sapiens</name>
    <name type="common">Human</name>
    <dbReference type="NCBI Taxonomy" id="9606"/>
    <lineage>
        <taxon>Eukaryota</taxon>
        <taxon>Metazoa</taxon>
        <taxon>Chordata</taxon>
        <taxon>Craniata</taxon>
        <taxon>Vertebrata</taxon>
        <taxon>Euteleostomi</taxon>
        <taxon>Mammalia</taxon>
        <taxon>Eutheria</taxon>
        <taxon>Euarchontoglires</taxon>
        <taxon>Primates</taxon>
        <taxon>Haplorrhini</taxon>
        <taxon>Catarrhini</taxon>
        <taxon>Hominidae</taxon>
        <taxon>Homo</taxon>
    </lineage>
</organism>
<name>FNDC5_HUMAN</name>
<sequence length="260" mass="28283">MQAARGGAGRPERPGRPGRGPERERERPPGAGAASPCAAPGLPAGGATIHPGSPSAWPPRARAALRLWLGCVCFALVQADSPSAPVNVTVRHLKANSAVVSWDVLEDEVVIGFAISQQKKDVRMLRFIQEVNTTTRSCALWDLEEDTEYIVHVQAISIQGQSPASEPVLFKTPREAEKMASKNKDEVTMKEMGRNQQLRTGEVLIIVVVLFMWAGVIALFCRQYDIIKDNEPNNNKEKTKSASETSTPEHQGGGLLRSKI</sequence>
<gene>
    <name type="primary">FNDC5</name>
    <name type="synonym">FRCP2</name>
</gene>
<accession>Q8NAU1</accession>
<accession>A0AA34QVI5</accession>
<accession>A6NMC9</accession>
<accession>D3DPQ6</accession>
<accession>Q6P6D9</accession>
<accession>Q7Z676</accession>